<protein>
    <recommendedName>
        <fullName>Transcriptional repressor p66-beta</fullName>
    </recommendedName>
    <alternativeName>
        <fullName>GATA zinc finger domain-containing protein 2B</fullName>
    </alternativeName>
    <alternativeName>
        <fullName>p66/p68</fullName>
    </alternativeName>
</protein>
<organism>
    <name type="scientific">Mus musculus</name>
    <name type="common">Mouse</name>
    <dbReference type="NCBI Taxonomy" id="10090"/>
    <lineage>
        <taxon>Eukaryota</taxon>
        <taxon>Metazoa</taxon>
        <taxon>Chordata</taxon>
        <taxon>Craniata</taxon>
        <taxon>Vertebrata</taxon>
        <taxon>Euteleostomi</taxon>
        <taxon>Mammalia</taxon>
        <taxon>Eutheria</taxon>
        <taxon>Euarchontoglires</taxon>
        <taxon>Glires</taxon>
        <taxon>Rodentia</taxon>
        <taxon>Myomorpha</taxon>
        <taxon>Muroidea</taxon>
        <taxon>Muridae</taxon>
        <taxon>Murinae</taxon>
        <taxon>Mus</taxon>
        <taxon>Mus</taxon>
    </lineage>
</organism>
<keyword id="KW-0025">Alternative splicing</keyword>
<keyword id="KW-0158">Chromosome</keyword>
<keyword id="KW-0175">Coiled coil</keyword>
<keyword id="KW-1017">Isopeptide bond</keyword>
<keyword id="KW-0479">Metal-binding</keyword>
<keyword id="KW-0539">Nucleus</keyword>
<keyword id="KW-0597">Phosphoprotein</keyword>
<keyword id="KW-1185">Reference proteome</keyword>
<keyword id="KW-0678">Repressor</keyword>
<keyword id="KW-0804">Transcription</keyword>
<keyword id="KW-0805">Transcription regulation</keyword>
<keyword id="KW-0832">Ubl conjugation</keyword>
<keyword id="KW-0862">Zinc</keyword>
<keyword id="KW-0863">Zinc-finger</keyword>
<accession>Q8VHR5</accession>
<accession>Q8C9Q3</accession>
<dbReference type="EMBL" id="AF411837">
    <property type="protein sequence ID" value="AAL39081.1"/>
    <property type="molecule type" value="mRNA"/>
</dbReference>
<dbReference type="EMBL" id="AK041594">
    <property type="protein sequence ID" value="BAC30997.1"/>
    <property type="molecule type" value="mRNA"/>
</dbReference>
<dbReference type="CCDS" id="CCDS17526.1">
    <molecule id="Q8VHR5-1"/>
</dbReference>
<dbReference type="RefSeq" id="NP_001366584.1">
    <molecule id="Q8VHR5-1"/>
    <property type="nucleotide sequence ID" value="NM_001379655.1"/>
</dbReference>
<dbReference type="RefSeq" id="NP_001366585.1">
    <molecule id="Q8VHR5-1"/>
    <property type="nucleotide sequence ID" value="NM_001379656.1"/>
</dbReference>
<dbReference type="RefSeq" id="NP_647465.1">
    <molecule id="Q8VHR5-1"/>
    <property type="nucleotide sequence ID" value="NM_139304.3"/>
</dbReference>
<dbReference type="RefSeq" id="XP_006501422.2">
    <property type="nucleotide sequence ID" value="XM_006501359.3"/>
</dbReference>
<dbReference type="RefSeq" id="XP_006501424.1">
    <property type="nucleotide sequence ID" value="XM_006501361.2"/>
</dbReference>
<dbReference type="RefSeq" id="XP_036018948.1">
    <molecule id="Q8VHR5-1"/>
    <property type="nucleotide sequence ID" value="XM_036163055.1"/>
</dbReference>
<dbReference type="SMR" id="Q8VHR5"/>
<dbReference type="BioGRID" id="230858">
    <property type="interactions" value="21"/>
</dbReference>
<dbReference type="ComplexPortal" id="CPX-953">
    <property type="entry name" value="MBD2/NuRD nucleosome remodeling and deacetylase complex"/>
</dbReference>
<dbReference type="ComplexPortal" id="CPX-954">
    <property type="entry name" value="MBD3/NuRD nucleosome remodeling and deacetylase complex"/>
</dbReference>
<dbReference type="CORUM" id="Q8VHR5"/>
<dbReference type="DIP" id="DIP-62049N"/>
<dbReference type="FunCoup" id="Q8VHR5">
    <property type="interactions" value="3414"/>
</dbReference>
<dbReference type="IntAct" id="Q8VHR5">
    <property type="interactions" value="8"/>
</dbReference>
<dbReference type="MINT" id="Q8VHR5"/>
<dbReference type="STRING" id="10090.ENSMUSP00000142514"/>
<dbReference type="GlyGen" id="Q8VHR5">
    <property type="glycosylation" value="12 sites, 1 N-linked glycan (1 site), 1 O-linked glycan (11 sites)"/>
</dbReference>
<dbReference type="iPTMnet" id="Q8VHR5"/>
<dbReference type="PhosphoSitePlus" id="Q8VHR5"/>
<dbReference type="SwissPalm" id="Q8VHR5"/>
<dbReference type="jPOST" id="Q8VHR5"/>
<dbReference type="PaxDb" id="10090-ENSMUSP00000041370"/>
<dbReference type="PeptideAtlas" id="Q8VHR5"/>
<dbReference type="ProteomicsDB" id="294313">
    <molecule id="Q8VHR5-1"/>
</dbReference>
<dbReference type="ProteomicsDB" id="294314">
    <molecule id="Q8VHR5-2"/>
</dbReference>
<dbReference type="Pumba" id="Q8VHR5"/>
<dbReference type="Antibodypedia" id="1795">
    <property type="antibodies" value="277 antibodies from 30 providers"/>
</dbReference>
<dbReference type="DNASU" id="229542"/>
<dbReference type="Ensembl" id="ENSMUST00000049382.6">
    <molecule id="Q8VHR5-1"/>
    <property type="protein sequence ID" value="ENSMUSP00000041370.5"/>
    <property type="gene ID" value="ENSMUSG00000042390.10"/>
</dbReference>
<dbReference type="Ensembl" id="ENSMUST00000199607.5">
    <molecule id="Q8VHR5-1"/>
    <property type="protein sequence ID" value="ENSMUSP00000142617.2"/>
    <property type="gene ID" value="ENSMUSG00000042390.10"/>
</dbReference>
<dbReference type="Ensembl" id="ENSMUST00000199754.5">
    <molecule id="Q8VHR5-1"/>
    <property type="protein sequence ID" value="ENSMUSP00000142514.2"/>
    <property type="gene ID" value="ENSMUSG00000042390.10"/>
</dbReference>
<dbReference type="GeneID" id="229542"/>
<dbReference type="KEGG" id="mmu:229542"/>
<dbReference type="UCSC" id="uc008qca.1">
    <molecule id="Q8VHR5-1"/>
    <property type="organism name" value="mouse"/>
</dbReference>
<dbReference type="AGR" id="MGI:2443225"/>
<dbReference type="CTD" id="57459"/>
<dbReference type="MGI" id="MGI:2443225">
    <property type="gene designation" value="Gatad2b"/>
</dbReference>
<dbReference type="VEuPathDB" id="HostDB:ENSMUSG00000042390"/>
<dbReference type="eggNOG" id="KOG3740">
    <property type="taxonomic scope" value="Eukaryota"/>
</dbReference>
<dbReference type="GeneTree" id="ENSGT00390000004097"/>
<dbReference type="InParanoid" id="Q8VHR5"/>
<dbReference type="OMA" id="RCDADHD"/>
<dbReference type="OrthoDB" id="7331812at2759"/>
<dbReference type="PhylomeDB" id="Q8VHR5"/>
<dbReference type="TreeFam" id="TF321369"/>
<dbReference type="Reactome" id="R-MMU-3214815">
    <property type="pathway name" value="HDACs deacetylate histones"/>
</dbReference>
<dbReference type="Reactome" id="R-MMU-6804758">
    <property type="pathway name" value="Regulation of TP53 Activity through Acetylation"/>
</dbReference>
<dbReference type="Reactome" id="R-MMU-73762">
    <property type="pathway name" value="RNA Polymerase I Transcription Initiation"/>
</dbReference>
<dbReference type="Reactome" id="R-MMU-8943724">
    <property type="pathway name" value="Regulation of PTEN gene transcription"/>
</dbReference>
<dbReference type="BioGRID-ORCS" id="229542">
    <property type="hits" value="4 hits in 67 CRISPR screens"/>
</dbReference>
<dbReference type="ChiTaRS" id="Gatad2b">
    <property type="organism name" value="mouse"/>
</dbReference>
<dbReference type="PRO" id="PR:Q8VHR5"/>
<dbReference type="Proteomes" id="UP000000589">
    <property type="component" value="Chromosome 3"/>
</dbReference>
<dbReference type="RNAct" id="Q8VHR5">
    <property type="molecule type" value="protein"/>
</dbReference>
<dbReference type="Bgee" id="ENSMUSG00000042390">
    <property type="expression patterns" value="Expressed in secondary oocyte and 229 other cell types or tissues"/>
</dbReference>
<dbReference type="ExpressionAtlas" id="Q8VHR5">
    <property type="expression patterns" value="baseline and differential"/>
</dbReference>
<dbReference type="GO" id="GO:0000781">
    <property type="term" value="C:chromosome, telomeric region"/>
    <property type="evidence" value="ECO:0007669"/>
    <property type="project" value="Ensembl"/>
</dbReference>
<dbReference type="GO" id="GO:0016607">
    <property type="term" value="C:nuclear speck"/>
    <property type="evidence" value="ECO:0007669"/>
    <property type="project" value="UniProtKB-SubCell"/>
</dbReference>
<dbReference type="GO" id="GO:0005634">
    <property type="term" value="C:nucleus"/>
    <property type="evidence" value="ECO:0000250"/>
    <property type="project" value="UniProtKB"/>
</dbReference>
<dbReference type="GO" id="GO:0016581">
    <property type="term" value="C:NuRD complex"/>
    <property type="evidence" value="ECO:0000250"/>
    <property type="project" value="UniProtKB"/>
</dbReference>
<dbReference type="GO" id="GO:0043565">
    <property type="term" value="F:sequence-specific DNA binding"/>
    <property type="evidence" value="ECO:0007669"/>
    <property type="project" value="InterPro"/>
</dbReference>
<dbReference type="GO" id="GO:0008270">
    <property type="term" value="F:zinc ion binding"/>
    <property type="evidence" value="ECO:0007669"/>
    <property type="project" value="UniProtKB-KW"/>
</dbReference>
<dbReference type="GO" id="GO:0006338">
    <property type="term" value="P:chromatin remodeling"/>
    <property type="evidence" value="ECO:0000266"/>
    <property type="project" value="ComplexPortal"/>
</dbReference>
<dbReference type="GO" id="GO:0045892">
    <property type="term" value="P:negative regulation of DNA-templated transcription"/>
    <property type="evidence" value="ECO:0000303"/>
    <property type="project" value="ComplexPortal"/>
</dbReference>
<dbReference type="GO" id="GO:0000122">
    <property type="term" value="P:negative regulation of transcription by RNA polymerase II"/>
    <property type="evidence" value="ECO:0007669"/>
    <property type="project" value="InterPro"/>
</dbReference>
<dbReference type="GO" id="GO:0045893">
    <property type="term" value="P:positive regulation of DNA-templated transcription"/>
    <property type="evidence" value="ECO:0000303"/>
    <property type="project" value="ComplexPortal"/>
</dbReference>
<dbReference type="GO" id="GO:0042659">
    <property type="term" value="P:regulation of cell fate specification"/>
    <property type="evidence" value="ECO:0000303"/>
    <property type="project" value="ComplexPortal"/>
</dbReference>
<dbReference type="GO" id="GO:2000736">
    <property type="term" value="P:regulation of stem cell differentiation"/>
    <property type="evidence" value="ECO:0000303"/>
    <property type="project" value="ComplexPortal"/>
</dbReference>
<dbReference type="Gene3D" id="6.10.250.1650">
    <property type="match status" value="1"/>
</dbReference>
<dbReference type="Gene3D" id="3.30.50.10">
    <property type="entry name" value="Erythroid Transcription Factor GATA-1, subunit A"/>
    <property type="match status" value="1"/>
</dbReference>
<dbReference type="InterPro" id="IPR040386">
    <property type="entry name" value="P66"/>
</dbReference>
<dbReference type="InterPro" id="IPR032346">
    <property type="entry name" value="P66_CC"/>
</dbReference>
<dbReference type="InterPro" id="IPR000679">
    <property type="entry name" value="Znf_GATA"/>
</dbReference>
<dbReference type="InterPro" id="IPR013088">
    <property type="entry name" value="Znf_NHR/GATA"/>
</dbReference>
<dbReference type="PANTHER" id="PTHR13455:SF4">
    <property type="entry name" value="TRANSCRIPTIONAL REPRESSOR P66-BETA"/>
    <property type="match status" value="1"/>
</dbReference>
<dbReference type="PANTHER" id="PTHR13455">
    <property type="entry name" value="TRANSCRIPTIONAL REPRESSOR P66-RELATED"/>
    <property type="match status" value="1"/>
</dbReference>
<dbReference type="Pfam" id="PF00320">
    <property type="entry name" value="GATA"/>
    <property type="match status" value="1"/>
</dbReference>
<dbReference type="Pfam" id="PF16563">
    <property type="entry name" value="P66_CC"/>
    <property type="match status" value="1"/>
</dbReference>
<dbReference type="SUPFAM" id="SSF57716">
    <property type="entry name" value="Glucocorticoid receptor-like (DNA-binding domain)"/>
    <property type="match status" value="1"/>
</dbReference>
<dbReference type="PROSITE" id="PS50114">
    <property type="entry name" value="GATA_ZN_FINGER_2"/>
    <property type="match status" value="1"/>
</dbReference>
<evidence type="ECO:0000250" key="1">
    <source>
        <dbReference type="UniProtKB" id="Q8WXI9"/>
    </source>
</evidence>
<evidence type="ECO:0000255" key="2"/>
<evidence type="ECO:0000255" key="3">
    <source>
        <dbReference type="PROSITE-ProRule" id="PRU00094"/>
    </source>
</evidence>
<evidence type="ECO:0000256" key="4">
    <source>
        <dbReference type="SAM" id="MobiDB-lite"/>
    </source>
</evidence>
<evidence type="ECO:0000303" key="5">
    <source>
    </source>
</evidence>
<evidence type="ECO:0000305" key="6"/>
<evidence type="ECO:0007744" key="7">
    <source>
    </source>
</evidence>
<evidence type="ECO:0007744" key="8">
    <source>
    </source>
</evidence>
<evidence type="ECO:0007744" key="9">
    <source>
    </source>
</evidence>
<sequence length="594" mass="65411">MDRMTEDALRLNLLKRSLDPADERDDVLAKRLKMEGHEAMERLKMLALLKRKDLANLEVPHELPTKQDGSGVKGYEEKLNGNLRPHGDNNRTAGRPGKENINDEPVDMSARRSEPDRGRLTPSPDIIVLSDNEASSPRSSSRMEERLKAANLEMFKGKGMEERQQLIKQLRDELRLEEARLVLLKKLRQSQLQKENVVQKTPVVQNAASIVQPSPAHVGQQGLSKLPSRPGAQGIEPQNMRTLQGHSVIRSATNTTLPHMLMSQRVIAPNPAQLQGQRGPPKPGIVRTTTPNMNPAISYQPQSSSSVPCQRTTSSAIYMNLASHIQPGTVNRVSSPLPSPSAMSDAANSQAAAKLALRKQLEKTLLEIPPPKPPAPLLHFLPSAANSEFIYMVGLEEVVQSVIDSQGKNCASLLRVEPFVCAQCRTDFTPHWKQEKNGKILCEQCMTSNQKKALKAEHTNRLKNAFVKALQQEQEIEQRLQQQAALSPTTAPAVSSVSKQETIMRHHTLRQAPQPQSSLQRGIPTSARSMLSNFAQAPQLSVPGGLLGMPGVNIAYLNTGIGGHKAPSLADRQREYLLDMIPPRSISQSISGQK</sequence>
<gene>
    <name type="primary">Gatad2b</name>
</gene>
<comment type="function">
    <text evidence="1">Transcriptional repressor. Acts as a component of the histone deacetylase NuRD complex which participates in the remodeling of chromatin. Enhances MBD2-mediated repression. Efficient repression requires the presence of GATAD2A. Targets MBD3 to discrete loci in the nucleus. May play a role in synapse development.</text>
</comment>
<comment type="subunit">
    <text evidence="1">Homooligomer. Component of the nucleosome remodeling and deacetylase (NuRD) repressor complex, composed of core proteins MTA1, MTA2, MTA3, RBBP4, RBBP7, HDAC1, HDAC2, MBD2, MBD3, and peripherally associated proteins CDK2AP1, CDK2AP2, GATAD2A, GATAD2B, CHD3, CHD4 and CHD5. The exact stoichiometry of the NuRD complex is unknown, and some subunits such as MBD2 and MBD3, GATAD2A and GATAD2B, and CHD3, CHD4 and CHD5 define mutually exclusive NuRD complexes. Interacts with MBD2; this is required for the enhancement of MBD2-mediated repression and for targeting to the chromatin. Interacts with MBD3. Component of the MeCP1 histone deacetylase complex. Interacts with histone tails, including that of histones H2A, H2B, H3 and H4. Interacts with ERCC6.</text>
</comment>
<comment type="interaction">
    <interactant intactId="EBI-3043880">
        <id>Q8VHR5</id>
    </interactant>
    <interactant intactId="EBI-10896863">
        <id>P12813</id>
        <label>Nr4a1</label>
    </interactant>
    <organismsDiffer>false</organismsDiffer>
    <experiments>2</experiments>
</comment>
<comment type="subcellular location">
    <subcellularLocation>
        <location evidence="1">Nucleus speckle</location>
    </subcellularLocation>
    <subcellularLocation>
        <location evidence="1">Nucleus</location>
    </subcellularLocation>
    <subcellularLocation>
        <location evidence="1">Chromosome</location>
    </subcellularLocation>
    <text evidence="1">Speckled nuclear localization requires both CR1 and CR2 regions. Localizes to sites of DNA damage.</text>
</comment>
<comment type="alternative products">
    <event type="alternative splicing"/>
    <isoform>
        <id>Q8VHR5-1</id>
        <name>1</name>
        <sequence type="displayed"/>
    </isoform>
    <isoform>
        <id>Q8VHR5-2</id>
        <name>2</name>
        <sequence type="described" ref="VSP_010930 VSP_010931"/>
    </isoform>
</comment>
<comment type="domain">
    <text evidence="1">Both CR1 and CR2 regions are required for speckled nuclear localization.</text>
</comment>
<comment type="miscellaneous">
    <molecule>Isoform 2</molecule>
    <text evidence="6">May be due to intron retention.</text>
</comment>
<reference key="1">
    <citation type="journal article" date="2002" name="Mol. Cell. Biol.">
        <title>Identification and functional characterization of the p66/p68 components of the MeCP1 complex.</title>
        <authorList>
            <person name="Feng Q."/>
            <person name="Cao R."/>
            <person name="Xia L."/>
            <person name="Erdjument-Bromage H."/>
            <person name="Tempst P."/>
            <person name="Zhang Y."/>
        </authorList>
    </citation>
    <scope>NUCLEOTIDE SEQUENCE [MRNA] (ISOFORM 1)</scope>
</reference>
<reference key="2">
    <citation type="journal article" date="2005" name="Science">
        <title>The transcriptional landscape of the mammalian genome.</title>
        <authorList>
            <person name="Carninci P."/>
            <person name="Kasukawa T."/>
            <person name="Katayama S."/>
            <person name="Gough J."/>
            <person name="Frith M.C."/>
            <person name="Maeda N."/>
            <person name="Oyama R."/>
            <person name="Ravasi T."/>
            <person name="Lenhard B."/>
            <person name="Wells C."/>
            <person name="Kodzius R."/>
            <person name="Shimokawa K."/>
            <person name="Bajic V.B."/>
            <person name="Brenner S.E."/>
            <person name="Batalov S."/>
            <person name="Forrest A.R."/>
            <person name="Zavolan M."/>
            <person name="Davis M.J."/>
            <person name="Wilming L.G."/>
            <person name="Aidinis V."/>
            <person name="Allen J.E."/>
            <person name="Ambesi-Impiombato A."/>
            <person name="Apweiler R."/>
            <person name="Aturaliya R.N."/>
            <person name="Bailey T.L."/>
            <person name="Bansal M."/>
            <person name="Baxter L."/>
            <person name="Beisel K.W."/>
            <person name="Bersano T."/>
            <person name="Bono H."/>
            <person name="Chalk A.M."/>
            <person name="Chiu K.P."/>
            <person name="Choudhary V."/>
            <person name="Christoffels A."/>
            <person name="Clutterbuck D.R."/>
            <person name="Crowe M.L."/>
            <person name="Dalla E."/>
            <person name="Dalrymple B.P."/>
            <person name="de Bono B."/>
            <person name="Della Gatta G."/>
            <person name="di Bernardo D."/>
            <person name="Down T."/>
            <person name="Engstrom P."/>
            <person name="Fagiolini M."/>
            <person name="Faulkner G."/>
            <person name="Fletcher C.F."/>
            <person name="Fukushima T."/>
            <person name="Furuno M."/>
            <person name="Futaki S."/>
            <person name="Gariboldi M."/>
            <person name="Georgii-Hemming P."/>
            <person name="Gingeras T.R."/>
            <person name="Gojobori T."/>
            <person name="Green R.E."/>
            <person name="Gustincich S."/>
            <person name="Harbers M."/>
            <person name="Hayashi Y."/>
            <person name="Hensch T.K."/>
            <person name="Hirokawa N."/>
            <person name="Hill D."/>
            <person name="Huminiecki L."/>
            <person name="Iacono M."/>
            <person name="Ikeo K."/>
            <person name="Iwama A."/>
            <person name="Ishikawa T."/>
            <person name="Jakt M."/>
            <person name="Kanapin A."/>
            <person name="Katoh M."/>
            <person name="Kawasawa Y."/>
            <person name="Kelso J."/>
            <person name="Kitamura H."/>
            <person name="Kitano H."/>
            <person name="Kollias G."/>
            <person name="Krishnan S.P."/>
            <person name="Kruger A."/>
            <person name="Kummerfeld S.K."/>
            <person name="Kurochkin I.V."/>
            <person name="Lareau L.F."/>
            <person name="Lazarevic D."/>
            <person name="Lipovich L."/>
            <person name="Liu J."/>
            <person name="Liuni S."/>
            <person name="McWilliam S."/>
            <person name="Madan Babu M."/>
            <person name="Madera M."/>
            <person name="Marchionni L."/>
            <person name="Matsuda H."/>
            <person name="Matsuzawa S."/>
            <person name="Miki H."/>
            <person name="Mignone F."/>
            <person name="Miyake S."/>
            <person name="Morris K."/>
            <person name="Mottagui-Tabar S."/>
            <person name="Mulder N."/>
            <person name="Nakano N."/>
            <person name="Nakauchi H."/>
            <person name="Ng P."/>
            <person name="Nilsson R."/>
            <person name="Nishiguchi S."/>
            <person name="Nishikawa S."/>
            <person name="Nori F."/>
            <person name="Ohara O."/>
            <person name="Okazaki Y."/>
            <person name="Orlando V."/>
            <person name="Pang K.C."/>
            <person name="Pavan W.J."/>
            <person name="Pavesi G."/>
            <person name="Pesole G."/>
            <person name="Petrovsky N."/>
            <person name="Piazza S."/>
            <person name="Reed J."/>
            <person name="Reid J.F."/>
            <person name="Ring B.Z."/>
            <person name="Ringwald M."/>
            <person name="Rost B."/>
            <person name="Ruan Y."/>
            <person name="Salzberg S.L."/>
            <person name="Sandelin A."/>
            <person name="Schneider C."/>
            <person name="Schoenbach C."/>
            <person name="Sekiguchi K."/>
            <person name="Semple C.A."/>
            <person name="Seno S."/>
            <person name="Sessa L."/>
            <person name="Sheng Y."/>
            <person name="Shibata Y."/>
            <person name="Shimada H."/>
            <person name="Shimada K."/>
            <person name="Silva D."/>
            <person name="Sinclair B."/>
            <person name="Sperling S."/>
            <person name="Stupka E."/>
            <person name="Sugiura K."/>
            <person name="Sultana R."/>
            <person name="Takenaka Y."/>
            <person name="Taki K."/>
            <person name="Tammoja K."/>
            <person name="Tan S.L."/>
            <person name="Tang S."/>
            <person name="Taylor M.S."/>
            <person name="Tegner J."/>
            <person name="Teichmann S.A."/>
            <person name="Ueda H.R."/>
            <person name="van Nimwegen E."/>
            <person name="Verardo R."/>
            <person name="Wei C.L."/>
            <person name="Yagi K."/>
            <person name="Yamanishi H."/>
            <person name="Zabarovsky E."/>
            <person name="Zhu S."/>
            <person name="Zimmer A."/>
            <person name="Hide W."/>
            <person name="Bult C."/>
            <person name="Grimmond S.M."/>
            <person name="Teasdale R.D."/>
            <person name="Liu E.T."/>
            <person name="Brusic V."/>
            <person name="Quackenbush J."/>
            <person name="Wahlestedt C."/>
            <person name="Mattick J.S."/>
            <person name="Hume D.A."/>
            <person name="Kai C."/>
            <person name="Sasaki D."/>
            <person name="Tomaru Y."/>
            <person name="Fukuda S."/>
            <person name="Kanamori-Katayama M."/>
            <person name="Suzuki M."/>
            <person name="Aoki J."/>
            <person name="Arakawa T."/>
            <person name="Iida J."/>
            <person name="Imamura K."/>
            <person name="Itoh M."/>
            <person name="Kato T."/>
            <person name="Kawaji H."/>
            <person name="Kawagashira N."/>
            <person name="Kawashima T."/>
            <person name="Kojima M."/>
            <person name="Kondo S."/>
            <person name="Konno H."/>
            <person name="Nakano K."/>
            <person name="Ninomiya N."/>
            <person name="Nishio T."/>
            <person name="Okada M."/>
            <person name="Plessy C."/>
            <person name="Shibata K."/>
            <person name="Shiraki T."/>
            <person name="Suzuki S."/>
            <person name="Tagami M."/>
            <person name="Waki K."/>
            <person name="Watahiki A."/>
            <person name="Okamura-Oho Y."/>
            <person name="Suzuki H."/>
            <person name="Kawai J."/>
            <person name="Hayashizaki Y."/>
        </authorList>
    </citation>
    <scope>NUCLEOTIDE SEQUENCE [LARGE SCALE MRNA] (ISOFORM 2)</scope>
    <source>
        <strain>C57BL/6J</strain>
        <tissue>Thymus</tissue>
    </source>
</reference>
<reference key="3">
    <citation type="journal article" date="2004" name="Mol. Cell. Proteomics">
        <title>Phosphoproteomic analysis of the developing mouse brain.</title>
        <authorList>
            <person name="Ballif B.A."/>
            <person name="Villen J."/>
            <person name="Beausoleil S.A."/>
            <person name="Schwartz D."/>
            <person name="Gygi S.P."/>
        </authorList>
    </citation>
    <scope>IDENTIFICATION BY MASS SPECTROMETRY [LARGE SCALE ANALYSIS]</scope>
    <source>
        <tissue>Embryonic brain</tissue>
    </source>
</reference>
<reference key="4">
    <citation type="journal article" date="2007" name="Proc. Natl. Acad. Sci. U.S.A.">
        <title>Large-scale phosphorylation analysis of mouse liver.</title>
        <authorList>
            <person name="Villen J."/>
            <person name="Beausoleil S.A."/>
            <person name="Gerber S.A."/>
            <person name="Gygi S.P."/>
        </authorList>
    </citation>
    <scope>PHOSPHORYLATION [LARGE SCALE ANALYSIS] AT THR-121; SER-123; SER-130 AND SER-136</scope>
    <scope>IDENTIFICATION BY MASS SPECTROMETRY [LARGE SCALE ANALYSIS]</scope>
    <source>
        <tissue>Liver</tissue>
    </source>
</reference>
<reference key="5">
    <citation type="journal article" date="2009" name="Immunity">
        <title>The phagosomal proteome in interferon-gamma-activated macrophages.</title>
        <authorList>
            <person name="Trost M."/>
            <person name="English L."/>
            <person name="Lemieux S."/>
            <person name="Courcelles M."/>
            <person name="Desjardins M."/>
            <person name="Thibault P."/>
        </authorList>
    </citation>
    <scope>PHOSPHORYLATION [LARGE SCALE ANALYSIS] AT THR-121; SER-123 AND SER-136</scope>
    <scope>IDENTIFICATION BY MASS SPECTROMETRY [LARGE SCALE ANALYSIS]</scope>
</reference>
<reference key="6">
    <citation type="journal article" date="2010" name="Cell">
        <title>A tissue-specific atlas of mouse protein phosphorylation and expression.</title>
        <authorList>
            <person name="Huttlin E.L."/>
            <person name="Jedrychowski M.P."/>
            <person name="Elias J.E."/>
            <person name="Goswami T."/>
            <person name="Rad R."/>
            <person name="Beausoleil S.A."/>
            <person name="Villen J."/>
            <person name="Haas W."/>
            <person name="Sowa M.E."/>
            <person name="Gygi S.P."/>
        </authorList>
    </citation>
    <scope>PHOSPHORYLATION [LARGE SCALE ANALYSIS] AT THR-121; SER-123; SER-130; SER-135; SER-136; SER-339 AND SER-341</scope>
    <scope>IDENTIFICATION BY MASS SPECTROMETRY [LARGE SCALE ANALYSIS]</scope>
    <source>
        <tissue>Brain</tissue>
        <tissue>Brown adipose tissue</tissue>
        <tissue>Heart</tissue>
        <tissue>Kidney</tissue>
        <tissue>Liver</tissue>
        <tissue>Lung</tissue>
        <tissue>Pancreas</tissue>
        <tissue>Spleen</tissue>
        <tissue>Testis</tissue>
    </source>
</reference>
<feature type="chain" id="PRO_0000083503" description="Transcriptional repressor p66-beta">
    <location>
        <begin position="1"/>
        <end position="594"/>
    </location>
</feature>
<feature type="zinc finger region" description="GATA-type" evidence="3">
    <location>
        <begin position="415"/>
        <end position="468"/>
    </location>
</feature>
<feature type="region of interest" description="Disordered" evidence="4">
    <location>
        <begin position="62"/>
        <end position="143"/>
    </location>
</feature>
<feature type="region of interest" description="CR1; interaction with MBD2 and MBD3" evidence="1">
    <location>
        <begin position="166"/>
        <end position="191"/>
    </location>
</feature>
<feature type="region of interest" description="Disordered" evidence="4">
    <location>
        <begin position="214"/>
        <end position="237"/>
    </location>
</feature>
<feature type="region of interest" description="CR2; histone tail-binding" evidence="1">
    <location>
        <begin position="341"/>
        <end position="481"/>
    </location>
</feature>
<feature type="coiled-coil region" evidence="2">
    <location>
        <begin position="141"/>
        <end position="195"/>
    </location>
</feature>
<feature type="coiled-coil region" evidence="2">
    <location>
        <begin position="450"/>
        <end position="483"/>
    </location>
</feature>
<feature type="compositionally biased region" description="Basic and acidic residues" evidence="4">
    <location>
        <begin position="74"/>
        <end position="89"/>
    </location>
</feature>
<feature type="compositionally biased region" description="Basic and acidic residues" evidence="4">
    <location>
        <begin position="109"/>
        <end position="119"/>
    </location>
</feature>
<feature type="compositionally biased region" description="Low complexity" evidence="4">
    <location>
        <begin position="130"/>
        <end position="140"/>
    </location>
</feature>
<feature type="modified residue" description="Phosphoserine" evidence="1">
    <location>
        <position position="17"/>
    </location>
</feature>
<feature type="modified residue" description="Phosphothreonine" evidence="7 8 9">
    <location>
        <position position="121"/>
    </location>
</feature>
<feature type="modified residue" description="Phosphoserine" evidence="7 8 9">
    <location>
        <position position="123"/>
    </location>
</feature>
<feature type="modified residue" description="Phosphoserine" evidence="7 9">
    <location>
        <position position="130"/>
    </location>
</feature>
<feature type="modified residue" description="Phosphoserine" evidence="9">
    <location>
        <position position="135"/>
    </location>
</feature>
<feature type="modified residue" description="Phosphoserine" evidence="7 8 9">
    <location>
        <position position="136"/>
    </location>
</feature>
<feature type="modified residue" description="Phosphoserine" evidence="1">
    <location>
        <position position="209"/>
    </location>
</feature>
<feature type="modified residue" description="Phosphoserine" evidence="1">
    <location>
        <position position="334"/>
    </location>
</feature>
<feature type="modified residue" description="Phosphoserine" evidence="9">
    <location>
        <position position="339"/>
    </location>
</feature>
<feature type="modified residue" description="Phosphoserine" evidence="9">
    <location>
        <position position="341"/>
    </location>
</feature>
<feature type="modified residue" description="Phosphoserine" evidence="1">
    <location>
        <position position="487"/>
    </location>
</feature>
<feature type="cross-link" description="Glycyl lysine isopeptide (Lys-Gly) (interchain with G-Cter in SUMO2)" evidence="1">
    <location>
        <position position="33"/>
    </location>
</feature>
<feature type="cross-link" description="Glycyl lysine isopeptide (Lys-Gly) (interchain with G-Cter in SUMO2)" evidence="1">
    <location>
        <position position="66"/>
    </location>
</feature>
<feature type="cross-link" description="Glycyl lysine isopeptide (Lys-Gly) (interchain with G-Cter in SUMO2)" evidence="1">
    <location>
        <position position="98"/>
    </location>
</feature>
<feature type="cross-link" description="Glycyl lysine isopeptide (Lys-Gly) (interchain with G-Cter in SUMO2)" evidence="1">
    <location>
        <position position="148"/>
    </location>
</feature>
<feature type="cross-link" description="Glycyl lysine isopeptide (Lys-Gly) (interchain with G-Cter in SUMO2)" evidence="1">
    <location>
        <position position="200"/>
    </location>
</feature>
<feature type="cross-link" description="Glycyl lysine isopeptide (Lys-Gly) (interchain with G-Cter in SUMO2)" evidence="1">
    <location>
        <position position="282"/>
    </location>
</feature>
<feature type="cross-link" description="Glycyl lysine isopeptide (Lys-Gly) (interchain with G-Cter in SUMO2)" evidence="1">
    <location>
        <position position="354"/>
    </location>
</feature>
<feature type="cross-link" description="Glycyl lysine isopeptide (Lys-Gly) (interchain with G-Cter in SUMO2)" evidence="1">
    <location>
        <position position="455"/>
    </location>
</feature>
<feature type="cross-link" description="Glycyl lysine isopeptide (Lys-Gly) (interchain with G-Cter in SUMO2)" evidence="1">
    <location>
        <position position="468"/>
    </location>
</feature>
<feature type="cross-link" description="Glycyl lysine isopeptide (Lys-Gly) (interchain with G-Cter in SUMO2)" evidence="1">
    <location>
        <position position="499"/>
    </location>
</feature>
<feature type="splice variant" id="VSP_010930" description="In isoform 2." evidence="5">
    <original>EIEQRLQQQAA</original>
    <variation>VRTLTPTCTVI</variation>
    <location>
        <begin position="475"/>
        <end position="485"/>
    </location>
</feature>
<feature type="splice variant" id="VSP_010931" description="In isoform 2." evidence="5">
    <location>
        <begin position="486"/>
        <end position="594"/>
    </location>
</feature>
<proteinExistence type="evidence at protein level"/>
<name>P66B_MOUSE</name>